<keyword id="KW-0150">Chloroplast</keyword>
<keyword id="KW-0934">Plastid</keyword>
<keyword id="KW-0687">Ribonucleoprotein</keyword>
<keyword id="KW-0689">Ribosomal protein</keyword>
<comment type="subcellular location">
    <subcellularLocation>
        <location>Plastid</location>
        <location>Chloroplast</location>
    </subcellularLocation>
</comment>
<comment type="similarity">
    <text evidence="1">Belongs to the bacterial ribosomal protein bL36 family.</text>
</comment>
<accession>A4GGD9</accession>
<reference key="1">
    <citation type="journal article" date="2007" name="BMC Genomics">
        <title>Rapid evolutionary change of common bean (Phaseolus vulgaris L) plastome, and the genomic diversification of legume chloroplasts.</title>
        <authorList>
            <person name="Guo X."/>
            <person name="Castillo-Ramirez S."/>
            <person name="Gonzalez V."/>
            <person name="Bustos P."/>
            <person name="Fernandez-Vazquez J.L."/>
            <person name="Santamaria R.I."/>
            <person name="Arellano J."/>
            <person name="Cevallos M.A."/>
            <person name="Davila G."/>
        </authorList>
    </citation>
    <scope>NUCLEOTIDE SEQUENCE [LARGE SCALE GENOMIC DNA]</scope>
    <source>
        <strain>cv. Negro Jamapa</strain>
    </source>
</reference>
<reference key="2">
    <citation type="submission" date="2007-10" db="EMBL/GenBank/DDBJ databases">
        <title>Complete nucleotide sequence of the plastid genome of the common bean, Phaseolus vulgaris.</title>
        <authorList>
            <person name="Moore M.J."/>
            <person name="Triplett E.W."/>
            <person name="Broughton W.J."/>
            <person name="Soltis P.S."/>
            <person name="Soltis D.E."/>
        </authorList>
    </citation>
    <scope>NUCLEOTIDE SEQUENCE [LARGE SCALE GENOMIC DNA]</scope>
</reference>
<name>RK36_PHAVU</name>
<gene>
    <name evidence="1" type="primary">rpl36</name>
</gene>
<dbReference type="EMBL" id="DQ886273">
    <property type="protein sequence ID" value="ABH88119.1"/>
    <property type="molecule type" value="Genomic_DNA"/>
</dbReference>
<dbReference type="EMBL" id="EU196765">
    <property type="protein sequence ID" value="ABW22750.1"/>
    <property type="molecule type" value="Genomic_DNA"/>
</dbReference>
<dbReference type="RefSeq" id="YP_001122840.1">
    <property type="nucleotide sequence ID" value="NC_009259.1"/>
</dbReference>
<dbReference type="SMR" id="A4GGD9"/>
<dbReference type="GeneID" id="4961789"/>
<dbReference type="KEGG" id="pvu:4961789"/>
<dbReference type="GO" id="GO:0009507">
    <property type="term" value="C:chloroplast"/>
    <property type="evidence" value="ECO:0007669"/>
    <property type="project" value="UniProtKB-SubCell"/>
</dbReference>
<dbReference type="GO" id="GO:1990904">
    <property type="term" value="C:ribonucleoprotein complex"/>
    <property type="evidence" value="ECO:0007669"/>
    <property type="project" value="UniProtKB-KW"/>
</dbReference>
<dbReference type="GO" id="GO:0005840">
    <property type="term" value="C:ribosome"/>
    <property type="evidence" value="ECO:0007669"/>
    <property type="project" value="UniProtKB-KW"/>
</dbReference>
<dbReference type="GO" id="GO:0003735">
    <property type="term" value="F:structural constituent of ribosome"/>
    <property type="evidence" value="ECO:0007669"/>
    <property type="project" value="InterPro"/>
</dbReference>
<dbReference type="GO" id="GO:0006412">
    <property type="term" value="P:translation"/>
    <property type="evidence" value="ECO:0007669"/>
    <property type="project" value="UniProtKB-UniRule"/>
</dbReference>
<dbReference type="HAMAP" id="MF_00251">
    <property type="entry name" value="Ribosomal_bL36"/>
    <property type="match status" value="1"/>
</dbReference>
<dbReference type="InterPro" id="IPR000473">
    <property type="entry name" value="Ribosomal_bL36"/>
</dbReference>
<dbReference type="InterPro" id="IPR035977">
    <property type="entry name" value="Ribosomal_bL36_sp"/>
</dbReference>
<dbReference type="NCBIfam" id="TIGR01022">
    <property type="entry name" value="rpmJ_bact"/>
    <property type="match status" value="1"/>
</dbReference>
<dbReference type="PANTHER" id="PTHR42888">
    <property type="entry name" value="50S RIBOSOMAL PROTEIN L36, CHLOROPLASTIC"/>
    <property type="match status" value="1"/>
</dbReference>
<dbReference type="PANTHER" id="PTHR42888:SF1">
    <property type="entry name" value="LARGE RIBOSOMAL SUBUNIT PROTEIN BL36C"/>
    <property type="match status" value="1"/>
</dbReference>
<dbReference type="Pfam" id="PF00444">
    <property type="entry name" value="Ribosomal_L36"/>
    <property type="match status" value="1"/>
</dbReference>
<dbReference type="SUPFAM" id="SSF57840">
    <property type="entry name" value="Ribosomal protein L36"/>
    <property type="match status" value="1"/>
</dbReference>
<dbReference type="PROSITE" id="PS00828">
    <property type="entry name" value="RIBOSOMAL_L36"/>
    <property type="match status" value="1"/>
</dbReference>
<sequence length="37" mass="4450">MKINASVRKICEKCRLIRRRGRIIVICFNPKHKQRQG</sequence>
<evidence type="ECO:0000255" key="1">
    <source>
        <dbReference type="HAMAP-Rule" id="MF_00251"/>
    </source>
</evidence>
<evidence type="ECO:0000305" key="2"/>
<feature type="chain" id="PRO_0000344778" description="Large ribosomal subunit protein bL36c">
    <location>
        <begin position="1"/>
        <end position="37"/>
    </location>
</feature>
<geneLocation type="chloroplast"/>
<proteinExistence type="inferred from homology"/>
<protein>
    <recommendedName>
        <fullName evidence="1">Large ribosomal subunit protein bL36c</fullName>
    </recommendedName>
    <alternativeName>
        <fullName evidence="2">50S ribosomal protein L36, chloroplastic</fullName>
    </alternativeName>
</protein>
<organism>
    <name type="scientific">Phaseolus vulgaris</name>
    <name type="common">Kidney bean</name>
    <name type="synonym">French bean</name>
    <dbReference type="NCBI Taxonomy" id="3885"/>
    <lineage>
        <taxon>Eukaryota</taxon>
        <taxon>Viridiplantae</taxon>
        <taxon>Streptophyta</taxon>
        <taxon>Embryophyta</taxon>
        <taxon>Tracheophyta</taxon>
        <taxon>Spermatophyta</taxon>
        <taxon>Magnoliopsida</taxon>
        <taxon>eudicotyledons</taxon>
        <taxon>Gunneridae</taxon>
        <taxon>Pentapetalae</taxon>
        <taxon>rosids</taxon>
        <taxon>fabids</taxon>
        <taxon>Fabales</taxon>
        <taxon>Fabaceae</taxon>
        <taxon>Papilionoideae</taxon>
        <taxon>50 kb inversion clade</taxon>
        <taxon>NPAAA clade</taxon>
        <taxon>indigoferoid/millettioid clade</taxon>
        <taxon>Phaseoleae</taxon>
        <taxon>Phaseolus</taxon>
    </lineage>
</organism>